<keyword id="KW-0067">ATP-binding</keyword>
<keyword id="KW-0997">Cell inner membrane</keyword>
<keyword id="KW-1003">Cell membrane</keyword>
<keyword id="KW-0963">Cytoplasm</keyword>
<keyword id="KW-0472">Membrane</keyword>
<keyword id="KW-0479">Metal-binding</keyword>
<keyword id="KW-0547">Nucleotide-binding</keyword>
<keyword id="KW-0653">Protein transport</keyword>
<keyword id="KW-1185">Reference proteome</keyword>
<keyword id="KW-1278">Translocase</keyword>
<keyword id="KW-0811">Translocation</keyword>
<keyword id="KW-0813">Transport</keyword>
<keyword id="KW-0862">Zinc</keyword>
<feature type="chain" id="PRO_0000320918" description="Protein translocase subunit SecA">
    <location>
        <begin position="1"/>
        <end position="921"/>
    </location>
</feature>
<feature type="binding site" evidence="1">
    <location>
        <position position="87"/>
    </location>
    <ligand>
        <name>ATP</name>
        <dbReference type="ChEBI" id="CHEBI:30616"/>
    </ligand>
</feature>
<feature type="binding site" evidence="1">
    <location>
        <begin position="105"/>
        <end position="109"/>
    </location>
    <ligand>
        <name>ATP</name>
        <dbReference type="ChEBI" id="CHEBI:30616"/>
    </ligand>
</feature>
<feature type="binding site" evidence="1">
    <location>
        <position position="516"/>
    </location>
    <ligand>
        <name>ATP</name>
        <dbReference type="ChEBI" id="CHEBI:30616"/>
    </ligand>
</feature>
<feature type="binding site" evidence="1">
    <location>
        <position position="905"/>
    </location>
    <ligand>
        <name>Zn(2+)</name>
        <dbReference type="ChEBI" id="CHEBI:29105"/>
    </ligand>
</feature>
<feature type="binding site" evidence="1">
    <location>
        <position position="907"/>
    </location>
    <ligand>
        <name>Zn(2+)</name>
        <dbReference type="ChEBI" id="CHEBI:29105"/>
    </ligand>
</feature>
<feature type="binding site" evidence="1">
    <location>
        <position position="916"/>
    </location>
    <ligand>
        <name>Zn(2+)</name>
        <dbReference type="ChEBI" id="CHEBI:29105"/>
    </ligand>
</feature>
<feature type="binding site" evidence="1">
    <location>
        <position position="917"/>
    </location>
    <ligand>
        <name>Zn(2+)</name>
        <dbReference type="ChEBI" id="CHEBI:29105"/>
    </ligand>
</feature>
<gene>
    <name evidence="1" type="primary">secA</name>
    <name type="ordered locus">Rfer_2911</name>
</gene>
<sequence length="921" mass="103627">MATNILTKIFGSRNDRQLKQYRKSVVRINAMEAELEKLSDEALRGKTQEFKDRIAKGESLDALLPEAFAVVREGSKRVMKMRHFDVQLLGGMSLHNGKISEMGTGEGKTLTATMPVYLNALTGKGVHVVTVNDYLANRDAQWMGKLYNFLGLSVGINLPNMAREEKQAAYRADITYGTNNEYGFDYLRDNMVYEGADRVQRGLNYAIVDEVDSILIDEARTPLIISGQAEDQTDLYIAINKVVPLLQRQEGEEDIRTGEGVTKPGDFTVDEKSHQVFLTEQGHESAERILSELGLIPEGATLYDPANITLMHHLYAALRANHLYHRDQHYVVQNGEIVIVDEFTGRLMSGRRWSEGLHQAVEAKEGVAIQPENQTMASITFQNYFRLYGKLAGMTGTADTEAYEFQEIYGLETLVMPPNRPSRRDDQLDRVYKTTREKYEAAIKDIRECYERGQPVLVGTTSIENSEIIAALLDKEKLPHQVLNAKQHAREAEIIAQAGRSKVITIATNMAGRGTDIVLGGNVSKELEAVEADETLTAEQKQQQIDAIQAQWVQEHEKVKALGGLRIIATERHESRRIDNQLRGRSGRQGDPGSSRFYLSLDDSLMRIFAGDRVKAIMDRLKMPDGEAIEAGIVTRSIESAQRKVESRNFDMRKQLLEYDDVANDQRKVIYQQRNEILDAGDLSAQIASLRAGCFDDLVRQYVPVESVEEQWDIATLEKVLADDWQLNLALQQQVSAASAITDHDLLTSVQQEADRVFAAKVEQVGGENFTQFERMVLLQSIDTHWREHLSSLDYLRQGIHLRGYAQKQPKQEYKREAFELFSQLLDAVKNDVTKVLMTVKVQSSEQLEQAAEDMESRGESIANVTYMAPTETGEVETITDDETFRKKSTIPGGNVPRVGRNELCPCGSGKKYKHCHGKLA</sequence>
<name>SECA_ALBFT</name>
<accession>Q21UD1</accession>
<proteinExistence type="inferred from homology"/>
<reference key="1">
    <citation type="submission" date="2006-02" db="EMBL/GenBank/DDBJ databases">
        <title>Complete sequence of chromosome of Rhodoferax ferrireducens DSM 15236.</title>
        <authorList>
            <person name="Copeland A."/>
            <person name="Lucas S."/>
            <person name="Lapidus A."/>
            <person name="Barry K."/>
            <person name="Detter J.C."/>
            <person name="Glavina del Rio T."/>
            <person name="Hammon N."/>
            <person name="Israni S."/>
            <person name="Pitluck S."/>
            <person name="Brettin T."/>
            <person name="Bruce D."/>
            <person name="Han C."/>
            <person name="Tapia R."/>
            <person name="Gilna P."/>
            <person name="Kiss H."/>
            <person name="Schmutz J."/>
            <person name="Larimer F."/>
            <person name="Land M."/>
            <person name="Kyrpides N."/>
            <person name="Ivanova N."/>
            <person name="Richardson P."/>
        </authorList>
    </citation>
    <scope>NUCLEOTIDE SEQUENCE [LARGE SCALE GENOMIC DNA]</scope>
    <source>
        <strain>ATCC BAA-621 / DSM 15236 / T118</strain>
    </source>
</reference>
<organism>
    <name type="scientific">Albidiferax ferrireducens (strain ATCC BAA-621 / DSM 15236 / T118)</name>
    <name type="common">Rhodoferax ferrireducens</name>
    <dbReference type="NCBI Taxonomy" id="338969"/>
    <lineage>
        <taxon>Bacteria</taxon>
        <taxon>Pseudomonadati</taxon>
        <taxon>Pseudomonadota</taxon>
        <taxon>Betaproteobacteria</taxon>
        <taxon>Burkholderiales</taxon>
        <taxon>Comamonadaceae</taxon>
        <taxon>Rhodoferax</taxon>
    </lineage>
</organism>
<dbReference type="EC" id="7.4.2.8" evidence="1"/>
<dbReference type="EMBL" id="CP000267">
    <property type="protein sequence ID" value="ABD70622.1"/>
    <property type="molecule type" value="Genomic_DNA"/>
</dbReference>
<dbReference type="RefSeq" id="WP_011465188.1">
    <property type="nucleotide sequence ID" value="NC_007908.1"/>
</dbReference>
<dbReference type="SMR" id="Q21UD1"/>
<dbReference type="STRING" id="338969.Rfer_2911"/>
<dbReference type="KEGG" id="rfr:Rfer_2911"/>
<dbReference type="eggNOG" id="COG0653">
    <property type="taxonomic scope" value="Bacteria"/>
</dbReference>
<dbReference type="HOGENOM" id="CLU_005314_3_0_4"/>
<dbReference type="OrthoDB" id="9805579at2"/>
<dbReference type="Proteomes" id="UP000008332">
    <property type="component" value="Chromosome"/>
</dbReference>
<dbReference type="GO" id="GO:0031522">
    <property type="term" value="C:cell envelope Sec protein transport complex"/>
    <property type="evidence" value="ECO:0007669"/>
    <property type="project" value="TreeGrafter"/>
</dbReference>
<dbReference type="GO" id="GO:0005829">
    <property type="term" value="C:cytosol"/>
    <property type="evidence" value="ECO:0007669"/>
    <property type="project" value="TreeGrafter"/>
</dbReference>
<dbReference type="GO" id="GO:0005886">
    <property type="term" value="C:plasma membrane"/>
    <property type="evidence" value="ECO:0007669"/>
    <property type="project" value="UniProtKB-SubCell"/>
</dbReference>
<dbReference type="GO" id="GO:0005524">
    <property type="term" value="F:ATP binding"/>
    <property type="evidence" value="ECO:0007669"/>
    <property type="project" value="UniProtKB-UniRule"/>
</dbReference>
<dbReference type="GO" id="GO:0046872">
    <property type="term" value="F:metal ion binding"/>
    <property type="evidence" value="ECO:0007669"/>
    <property type="project" value="UniProtKB-KW"/>
</dbReference>
<dbReference type="GO" id="GO:0008564">
    <property type="term" value="F:protein-exporting ATPase activity"/>
    <property type="evidence" value="ECO:0007669"/>
    <property type="project" value="UniProtKB-EC"/>
</dbReference>
<dbReference type="GO" id="GO:0065002">
    <property type="term" value="P:intracellular protein transmembrane transport"/>
    <property type="evidence" value="ECO:0007669"/>
    <property type="project" value="UniProtKB-UniRule"/>
</dbReference>
<dbReference type="GO" id="GO:0017038">
    <property type="term" value="P:protein import"/>
    <property type="evidence" value="ECO:0007669"/>
    <property type="project" value="InterPro"/>
</dbReference>
<dbReference type="GO" id="GO:0006605">
    <property type="term" value="P:protein targeting"/>
    <property type="evidence" value="ECO:0007669"/>
    <property type="project" value="UniProtKB-UniRule"/>
</dbReference>
<dbReference type="GO" id="GO:0043952">
    <property type="term" value="P:protein transport by the Sec complex"/>
    <property type="evidence" value="ECO:0007669"/>
    <property type="project" value="TreeGrafter"/>
</dbReference>
<dbReference type="CDD" id="cd17928">
    <property type="entry name" value="DEXDc_SecA"/>
    <property type="match status" value="1"/>
</dbReference>
<dbReference type="CDD" id="cd18803">
    <property type="entry name" value="SF2_C_secA"/>
    <property type="match status" value="1"/>
</dbReference>
<dbReference type="FunFam" id="3.40.50.300:FF:000081">
    <property type="entry name" value="Preprotein translocase subunit SecA"/>
    <property type="match status" value="1"/>
</dbReference>
<dbReference type="FunFam" id="3.40.50.300:FF:000113">
    <property type="entry name" value="Preprotein translocase subunit SecA"/>
    <property type="match status" value="1"/>
</dbReference>
<dbReference type="FunFam" id="3.90.1440.10:FF:000001">
    <property type="entry name" value="Preprotein translocase subunit SecA"/>
    <property type="match status" value="1"/>
</dbReference>
<dbReference type="FunFam" id="1.10.3060.10:FF:000003">
    <property type="entry name" value="Protein translocase subunit SecA"/>
    <property type="match status" value="1"/>
</dbReference>
<dbReference type="Gene3D" id="1.10.3060.10">
    <property type="entry name" value="Helical scaffold and wing domains of SecA"/>
    <property type="match status" value="1"/>
</dbReference>
<dbReference type="Gene3D" id="3.40.50.300">
    <property type="entry name" value="P-loop containing nucleotide triphosphate hydrolases"/>
    <property type="match status" value="2"/>
</dbReference>
<dbReference type="Gene3D" id="3.90.1440.10">
    <property type="entry name" value="SecA, preprotein cross-linking domain"/>
    <property type="match status" value="1"/>
</dbReference>
<dbReference type="HAMAP" id="MF_01382">
    <property type="entry name" value="SecA"/>
    <property type="match status" value="1"/>
</dbReference>
<dbReference type="InterPro" id="IPR014001">
    <property type="entry name" value="Helicase_ATP-bd"/>
</dbReference>
<dbReference type="InterPro" id="IPR001650">
    <property type="entry name" value="Helicase_C-like"/>
</dbReference>
<dbReference type="InterPro" id="IPR027417">
    <property type="entry name" value="P-loop_NTPase"/>
</dbReference>
<dbReference type="InterPro" id="IPR004027">
    <property type="entry name" value="SEC_C_motif"/>
</dbReference>
<dbReference type="InterPro" id="IPR000185">
    <property type="entry name" value="SecA"/>
</dbReference>
<dbReference type="InterPro" id="IPR020937">
    <property type="entry name" value="SecA_CS"/>
</dbReference>
<dbReference type="InterPro" id="IPR011115">
    <property type="entry name" value="SecA_DEAD"/>
</dbReference>
<dbReference type="InterPro" id="IPR014018">
    <property type="entry name" value="SecA_motor_DEAD"/>
</dbReference>
<dbReference type="InterPro" id="IPR011130">
    <property type="entry name" value="SecA_preprotein_X-link_dom"/>
</dbReference>
<dbReference type="InterPro" id="IPR044722">
    <property type="entry name" value="SecA_SF2_C"/>
</dbReference>
<dbReference type="InterPro" id="IPR011116">
    <property type="entry name" value="SecA_Wing/Scaffold"/>
</dbReference>
<dbReference type="InterPro" id="IPR036266">
    <property type="entry name" value="SecA_Wing/Scaffold_sf"/>
</dbReference>
<dbReference type="InterPro" id="IPR036670">
    <property type="entry name" value="SecA_X-link_sf"/>
</dbReference>
<dbReference type="NCBIfam" id="NF009538">
    <property type="entry name" value="PRK12904.1"/>
    <property type="match status" value="1"/>
</dbReference>
<dbReference type="NCBIfam" id="TIGR00963">
    <property type="entry name" value="secA"/>
    <property type="match status" value="1"/>
</dbReference>
<dbReference type="PANTHER" id="PTHR30612:SF0">
    <property type="entry name" value="CHLOROPLAST PROTEIN-TRANSPORTING ATPASE"/>
    <property type="match status" value="1"/>
</dbReference>
<dbReference type="PANTHER" id="PTHR30612">
    <property type="entry name" value="SECA INNER MEMBRANE COMPONENT OF SEC PROTEIN SECRETION SYSTEM"/>
    <property type="match status" value="1"/>
</dbReference>
<dbReference type="Pfam" id="PF21090">
    <property type="entry name" value="P-loop_SecA"/>
    <property type="match status" value="1"/>
</dbReference>
<dbReference type="Pfam" id="PF02810">
    <property type="entry name" value="SEC-C"/>
    <property type="match status" value="1"/>
</dbReference>
<dbReference type="Pfam" id="PF07517">
    <property type="entry name" value="SecA_DEAD"/>
    <property type="match status" value="1"/>
</dbReference>
<dbReference type="Pfam" id="PF01043">
    <property type="entry name" value="SecA_PP_bind"/>
    <property type="match status" value="1"/>
</dbReference>
<dbReference type="Pfam" id="PF07516">
    <property type="entry name" value="SecA_SW"/>
    <property type="match status" value="1"/>
</dbReference>
<dbReference type="PRINTS" id="PR00906">
    <property type="entry name" value="SECA"/>
</dbReference>
<dbReference type="SMART" id="SM00957">
    <property type="entry name" value="SecA_DEAD"/>
    <property type="match status" value="1"/>
</dbReference>
<dbReference type="SMART" id="SM00958">
    <property type="entry name" value="SecA_PP_bind"/>
    <property type="match status" value="1"/>
</dbReference>
<dbReference type="SUPFAM" id="SSF81886">
    <property type="entry name" value="Helical scaffold and wing domains of SecA"/>
    <property type="match status" value="1"/>
</dbReference>
<dbReference type="SUPFAM" id="SSF52540">
    <property type="entry name" value="P-loop containing nucleoside triphosphate hydrolases"/>
    <property type="match status" value="2"/>
</dbReference>
<dbReference type="SUPFAM" id="SSF81767">
    <property type="entry name" value="Pre-protein crosslinking domain of SecA"/>
    <property type="match status" value="1"/>
</dbReference>
<dbReference type="PROSITE" id="PS01312">
    <property type="entry name" value="SECA"/>
    <property type="match status" value="1"/>
</dbReference>
<dbReference type="PROSITE" id="PS51196">
    <property type="entry name" value="SECA_MOTOR_DEAD"/>
    <property type="match status" value="1"/>
</dbReference>
<comment type="function">
    <text evidence="1">Part of the Sec protein translocase complex. Interacts with the SecYEG preprotein conducting channel. Has a central role in coupling the hydrolysis of ATP to the transfer of proteins into and across the cell membrane, serving both as a receptor for the preprotein-SecB complex and as an ATP-driven molecular motor driving the stepwise translocation of polypeptide chains across the membrane.</text>
</comment>
<comment type="catalytic activity">
    <reaction evidence="1">
        <text>ATP + H2O + cellular proteinSide 1 = ADP + phosphate + cellular proteinSide 2.</text>
        <dbReference type="EC" id="7.4.2.8"/>
    </reaction>
</comment>
<comment type="cofactor">
    <cofactor evidence="1">
        <name>Zn(2+)</name>
        <dbReference type="ChEBI" id="CHEBI:29105"/>
    </cofactor>
    <text evidence="1">May bind 1 zinc ion per subunit.</text>
</comment>
<comment type="subunit">
    <text evidence="1">Monomer and homodimer. Part of the essential Sec protein translocation apparatus which comprises SecA, SecYEG and auxiliary proteins SecDF-YajC and YidC.</text>
</comment>
<comment type="subcellular location">
    <subcellularLocation>
        <location evidence="1">Cell inner membrane</location>
        <topology evidence="1">Peripheral membrane protein</topology>
        <orientation evidence="1">Cytoplasmic side</orientation>
    </subcellularLocation>
    <subcellularLocation>
        <location evidence="1">Cytoplasm</location>
    </subcellularLocation>
    <text evidence="1">Distribution is 50-50.</text>
</comment>
<comment type="similarity">
    <text evidence="1">Belongs to the SecA family.</text>
</comment>
<protein>
    <recommendedName>
        <fullName evidence="1">Protein translocase subunit SecA</fullName>
        <ecNumber evidence="1">7.4.2.8</ecNumber>
    </recommendedName>
</protein>
<evidence type="ECO:0000255" key="1">
    <source>
        <dbReference type="HAMAP-Rule" id="MF_01382"/>
    </source>
</evidence>